<feature type="chain" id="PRO_0000170156" description="Large ribosomal subunit protein bL33">
    <location>
        <begin position="1"/>
        <end position="54"/>
    </location>
</feature>
<gene>
    <name evidence="1" type="primary">rpmG</name>
    <name type="ordered locus">Cgl0868</name>
    <name type="ordered locus">cg0990</name>
</gene>
<dbReference type="EMBL" id="BA000036">
    <property type="protein sequence ID" value="BAB98261.1"/>
    <property type="molecule type" value="Genomic_DNA"/>
</dbReference>
<dbReference type="EMBL" id="BX927150">
    <property type="protein sequence ID" value="CAF19573.1"/>
    <property type="molecule type" value="Genomic_DNA"/>
</dbReference>
<dbReference type="RefSeq" id="NP_600096.1">
    <property type="nucleotide sequence ID" value="NC_003450.3"/>
</dbReference>
<dbReference type="RefSeq" id="WP_003858439.1">
    <property type="nucleotide sequence ID" value="NC_006958.1"/>
</dbReference>
<dbReference type="SMR" id="Q8NS16"/>
<dbReference type="STRING" id="196627.cg0990"/>
<dbReference type="GeneID" id="93974988"/>
<dbReference type="KEGG" id="cgb:cg0990"/>
<dbReference type="KEGG" id="cgl:Cgl0868"/>
<dbReference type="PATRIC" id="fig|196627.13.peg.852"/>
<dbReference type="eggNOG" id="COG0267">
    <property type="taxonomic scope" value="Bacteria"/>
</dbReference>
<dbReference type="HOGENOM" id="CLU_190949_1_1_11"/>
<dbReference type="OrthoDB" id="21586at2"/>
<dbReference type="BioCyc" id="CORYNE:G18NG-10438-MONOMER"/>
<dbReference type="PRO" id="PR:Q8NS16"/>
<dbReference type="Proteomes" id="UP000000582">
    <property type="component" value="Chromosome"/>
</dbReference>
<dbReference type="Proteomes" id="UP000001009">
    <property type="component" value="Chromosome"/>
</dbReference>
<dbReference type="GO" id="GO:0022625">
    <property type="term" value="C:cytosolic large ribosomal subunit"/>
    <property type="evidence" value="ECO:0007669"/>
    <property type="project" value="TreeGrafter"/>
</dbReference>
<dbReference type="GO" id="GO:0003735">
    <property type="term" value="F:structural constituent of ribosome"/>
    <property type="evidence" value="ECO:0007669"/>
    <property type="project" value="InterPro"/>
</dbReference>
<dbReference type="GO" id="GO:0006412">
    <property type="term" value="P:translation"/>
    <property type="evidence" value="ECO:0007669"/>
    <property type="project" value="UniProtKB-UniRule"/>
</dbReference>
<dbReference type="FunFam" id="2.20.28.120:FF:000002">
    <property type="entry name" value="50S ribosomal protein L33"/>
    <property type="match status" value="1"/>
</dbReference>
<dbReference type="Gene3D" id="2.20.28.120">
    <property type="entry name" value="Ribosomal protein L33"/>
    <property type="match status" value="1"/>
</dbReference>
<dbReference type="HAMAP" id="MF_00294">
    <property type="entry name" value="Ribosomal_bL33"/>
    <property type="match status" value="1"/>
</dbReference>
<dbReference type="InterPro" id="IPR001705">
    <property type="entry name" value="Ribosomal_bL33"/>
</dbReference>
<dbReference type="InterPro" id="IPR018264">
    <property type="entry name" value="Ribosomal_bL33_CS"/>
</dbReference>
<dbReference type="InterPro" id="IPR038584">
    <property type="entry name" value="Ribosomal_bL33_sf"/>
</dbReference>
<dbReference type="InterPro" id="IPR011332">
    <property type="entry name" value="Ribosomal_zn-bd"/>
</dbReference>
<dbReference type="NCBIfam" id="NF001860">
    <property type="entry name" value="PRK00595.1"/>
    <property type="match status" value="1"/>
</dbReference>
<dbReference type="NCBIfam" id="TIGR01023">
    <property type="entry name" value="rpmG_bact"/>
    <property type="match status" value="1"/>
</dbReference>
<dbReference type="PANTHER" id="PTHR15238">
    <property type="entry name" value="54S RIBOSOMAL PROTEIN L39, MITOCHONDRIAL"/>
    <property type="match status" value="1"/>
</dbReference>
<dbReference type="PANTHER" id="PTHR15238:SF1">
    <property type="entry name" value="LARGE RIBOSOMAL SUBUNIT PROTEIN BL33M"/>
    <property type="match status" value="1"/>
</dbReference>
<dbReference type="Pfam" id="PF00471">
    <property type="entry name" value="Ribosomal_L33"/>
    <property type="match status" value="1"/>
</dbReference>
<dbReference type="SUPFAM" id="SSF57829">
    <property type="entry name" value="Zn-binding ribosomal proteins"/>
    <property type="match status" value="1"/>
</dbReference>
<dbReference type="PROSITE" id="PS00582">
    <property type="entry name" value="RIBOSOMAL_L33"/>
    <property type="match status" value="1"/>
</dbReference>
<comment type="similarity">
    <text evidence="1">Belongs to the bacterial ribosomal protein bL33 family.</text>
</comment>
<accession>Q8NS16</accession>
<organism>
    <name type="scientific">Corynebacterium glutamicum (strain ATCC 13032 / DSM 20300 / JCM 1318 / BCRC 11384 / CCUG 27702 / LMG 3730 / NBRC 12168 / NCIMB 10025 / NRRL B-2784 / 534)</name>
    <dbReference type="NCBI Taxonomy" id="196627"/>
    <lineage>
        <taxon>Bacteria</taxon>
        <taxon>Bacillati</taxon>
        <taxon>Actinomycetota</taxon>
        <taxon>Actinomycetes</taxon>
        <taxon>Mycobacteriales</taxon>
        <taxon>Corynebacteriaceae</taxon>
        <taxon>Corynebacterium</taxon>
    </lineage>
</organism>
<sequence length="54" mass="6463">MARNDIRPIIKLKSTAGTGYTYVTRKNKRNNPDRISLMKYDPVVRKHVEFREER</sequence>
<reference key="1">
    <citation type="journal article" date="2003" name="Appl. Microbiol. Biotechnol.">
        <title>The Corynebacterium glutamicum genome: features and impacts on biotechnological processes.</title>
        <authorList>
            <person name="Ikeda M."/>
            <person name="Nakagawa S."/>
        </authorList>
    </citation>
    <scope>NUCLEOTIDE SEQUENCE [LARGE SCALE GENOMIC DNA]</scope>
    <source>
        <strain>ATCC 13032 / DSM 20300 / JCM 1318 / BCRC 11384 / CCUG 27702 / LMG 3730 / NBRC 12168 / NCIMB 10025 / NRRL B-2784 / 534</strain>
    </source>
</reference>
<reference key="2">
    <citation type="journal article" date="2003" name="J. Biotechnol.">
        <title>The complete Corynebacterium glutamicum ATCC 13032 genome sequence and its impact on the production of L-aspartate-derived amino acids and vitamins.</title>
        <authorList>
            <person name="Kalinowski J."/>
            <person name="Bathe B."/>
            <person name="Bartels D."/>
            <person name="Bischoff N."/>
            <person name="Bott M."/>
            <person name="Burkovski A."/>
            <person name="Dusch N."/>
            <person name="Eggeling L."/>
            <person name="Eikmanns B.J."/>
            <person name="Gaigalat L."/>
            <person name="Goesmann A."/>
            <person name="Hartmann M."/>
            <person name="Huthmacher K."/>
            <person name="Kraemer R."/>
            <person name="Linke B."/>
            <person name="McHardy A.C."/>
            <person name="Meyer F."/>
            <person name="Moeckel B."/>
            <person name="Pfefferle W."/>
            <person name="Puehler A."/>
            <person name="Rey D.A."/>
            <person name="Rueckert C."/>
            <person name="Rupp O."/>
            <person name="Sahm H."/>
            <person name="Wendisch V.F."/>
            <person name="Wiegraebe I."/>
            <person name="Tauch A."/>
        </authorList>
    </citation>
    <scope>NUCLEOTIDE SEQUENCE [LARGE SCALE GENOMIC DNA]</scope>
    <source>
        <strain>ATCC 13032 / DSM 20300 / JCM 1318 / BCRC 11384 / CCUG 27702 / LMG 3730 / NBRC 12168 / NCIMB 10025 / NRRL B-2784 / 534</strain>
    </source>
</reference>
<evidence type="ECO:0000255" key="1">
    <source>
        <dbReference type="HAMAP-Rule" id="MF_00294"/>
    </source>
</evidence>
<evidence type="ECO:0000305" key="2"/>
<proteinExistence type="inferred from homology"/>
<protein>
    <recommendedName>
        <fullName evidence="1">Large ribosomal subunit protein bL33</fullName>
    </recommendedName>
    <alternativeName>
        <fullName evidence="2">50S ribosomal protein L33</fullName>
    </alternativeName>
</protein>
<name>RL33_CORGL</name>
<keyword id="KW-1185">Reference proteome</keyword>
<keyword id="KW-0687">Ribonucleoprotein</keyword>
<keyword id="KW-0689">Ribosomal protein</keyword>